<reference key="1">
    <citation type="journal article" date="1992" name="Genes Dev.">
        <title>Apterous, a gene required for imaginal disc development in Drosophila encodes a member of the LIM family of developmental regulatory proteins.</title>
        <authorList>
            <person name="Cohen B."/>
            <person name="McGuffin M.E."/>
            <person name="Pfeifle C."/>
            <person name="Segal D."/>
            <person name="Cohen S.M."/>
        </authorList>
    </citation>
    <scope>NUCLEOTIDE SEQUENCE [GENOMIC DNA] (ISOFORM A)</scope>
</reference>
<reference key="2">
    <citation type="journal article" date="1992" name="Neuron">
        <title>Apterous is a Drosophila LIM domain gene required for the development of a subset of embryonic muscles.</title>
        <authorList>
            <person name="Bourgouin C."/>
            <person name="Lundgren S.E."/>
            <person name="Thomas J.B."/>
        </authorList>
    </citation>
    <scope>NUCLEOTIDE SEQUENCE [MRNA] (ISOFORM A)</scope>
</reference>
<reference key="3">
    <citation type="journal article" date="2000" name="Science">
        <title>The genome sequence of Drosophila melanogaster.</title>
        <authorList>
            <person name="Adams M.D."/>
            <person name="Celniker S.E."/>
            <person name="Holt R.A."/>
            <person name="Evans C.A."/>
            <person name="Gocayne J.D."/>
            <person name="Amanatides P.G."/>
            <person name="Scherer S.E."/>
            <person name="Li P.W."/>
            <person name="Hoskins R.A."/>
            <person name="Galle R.F."/>
            <person name="George R.A."/>
            <person name="Lewis S.E."/>
            <person name="Richards S."/>
            <person name="Ashburner M."/>
            <person name="Henderson S.N."/>
            <person name="Sutton G.G."/>
            <person name="Wortman J.R."/>
            <person name="Yandell M.D."/>
            <person name="Zhang Q."/>
            <person name="Chen L.X."/>
            <person name="Brandon R.C."/>
            <person name="Rogers Y.-H.C."/>
            <person name="Blazej R.G."/>
            <person name="Champe M."/>
            <person name="Pfeiffer B.D."/>
            <person name="Wan K.H."/>
            <person name="Doyle C."/>
            <person name="Baxter E.G."/>
            <person name="Helt G."/>
            <person name="Nelson C.R."/>
            <person name="Miklos G.L.G."/>
            <person name="Abril J.F."/>
            <person name="Agbayani A."/>
            <person name="An H.-J."/>
            <person name="Andrews-Pfannkoch C."/>
            <person name="Baldwin D."/>
            <person name="Ballew R.M."/>
            <person name="Basu A."/>
            <person name="Baxendale J."/>
            <person name="Bayraktaroglu L."/>
            <person name="Beasley E.M."/>
            <person name="Beeson K.Y."/>
            <person name="Benos P.V."/>
            <person name="Berman B.P."/>
            <person name="Bhandari D."/>
            <person name="Bolshakov S."/>
            <person name="Borkova D."/>
            <person name="Botchan M.R."/>
            <person name="Bouck J."/>
            <person name="Brokstein P."/>
            <person name="Brottier P."/>
            <person name="Burtis K.C."/>
            <person name="Busam D.A."/>
            <person name="Butler H."/>
            <person name="Cadieu E."/>
            <person name="Center A."/>
            <person name="Chandra I."/>
            <person name="Cherry J.M."/>
            <person name="Cawley S."/>
            <person name="Dahlke C."/>
            <person name="Davenport L.B."/>
            <person name="Davies P."/>
            <person name="de Pablos B."/>
            <person name="Delcher A."/>
            <person name="Deng Z."/>
            <person name="Mays A.D."/>
            <person name="Dew I."/>
            <person name="Dietz S.M."/>
            <person name="Dodson K."/>
            <person name="Doup L.E."/>
            <person name="Downes M."/>
            <person name="Dugan-Rocha S."/>
            <person name="Dunkov B.C."/>
            <person name="Dunn P."/>
            <person name="Durbin K.J."/>
            <person name="Evangelista C.C."/>
            <person name="Ferraz C."/>
            <person name="Ferriera S."/>
            <person name="Fleischmann W."/>
            <person name="Fosler C."/>
            <person name="Gabrielian A.E."/>
            <person name="Garg N.S."/>
            <person name="Gelbart W.M."/>
            <person name="Glasser K."/>
            <person name="Glodek A."/>
            <person name="Gong F."/>
            <person name="Gorrell J.H."/>
            <person name="Gu Z."/>
            <person name="Guan P."/>
            <person name="Harris M."/>
            <person name="Harris N.L."/>
            <person name="Harvey D.A."/>
            <person name="Heiman T.J."/>
            <person name="Hernandez J.R."/>
            <person name="Houck J."/>
            <person name="Hostin D."/>
            <person name="Houston K.A."/>
            <person name="Howland T.J."/>
            <person name="Wei M.-H."/>
            <person name="Ibegwam C."/>
            <person name="Jalali M."/>
            <person name="Kalush F."/>
            <person name="Karpen G.H."/>
            <person name="Ke Z."/>
            <person name="Kennison J.A."/>
            <person name="Ketchum K.A."/>
            <person name="Kimmel B.E."/>
            <person name="Kodira C.D."/>
            <person name="Kraft C.L."/>
            <person name="Kravitz S."/>
            <person name="Kulp D."/>
            <person name="Lai Z."/>
            <person name="Lasko P."/>
            <person name="Lei Y."/>
            <person name="Levitsky A.A."/>
            <person name="Li J.H."/>
            <person name="Li Z."/>
            <person name="Liang Y."/>
            <person name="Lin X."/>
            <person name="Liu X."/>
            <person name="Mattei B."/>
            <person name="McIntosh T.C."/>
            <person name="McLeod M.P."/>
            <person name="McPherson D."/>
            <person name="Merkulov G."/>
            <person name="Milshina N.V."/>
            <person name="Mobarry C."/>
            <person name="Morris J."/>
            <person name="Moshrefi A."/>
            <person name="Mount S.M."/>
            <person name="Moy M."/>
            <person name="Murphy B."/>
            <person name="Murphy L."/>
            <person name="Muzny D.M."/>
            <person name="Nelson D.L."/>
            <person name="Nelson D.R."/>
            <person name="Nelson K.A."/>
            <person name="Nixon K."/>
            <person name="Nusskern D.R."/>
            <person name="Pacleb J.M."/>
            <person name="Palazzolo M."/>
            <person name="Pittman G.S."/>
            <person name="Pan S."/>
            <person name="Pollard J."/>
            <person name="Puri V."/>
            <person name="Reese M.G."/>
            <person name="Reinert K."/>
            <person name="Remington K."/>
            <person name="Saunders R.D.C."/>
            <person name="Scheeler F."/>
            <person name="Shen H."/>
            <person name="Shue B.C."/>
            <person name="Siden-Kiamos I."/>
            <person name="Simpson M."/>
            <person name="Skupski M.P."/>
            <person name="Smith T.J."/>
            <person name="Spier E."/>
            <person name="Spradling A.C."/>
            <person name="Stapleton M."/>
            <person name="Strong R."/>
            <person name="Sun E."/>
            <person name="Svirskas R."/>
            <person name="Tector C."/>
            <person name="Turner R."/>
            <person name="Venter E."/>
            <person name="Wang A.H."/>
            <person name="Wang X."/>
            <person name="Wang Z.-Y."/>
            <person name="Wassarman D.A."/>
            <person name="Weinstock G.M."/>
            <person name="Weissenbach J."/>
            <person name="Williams S.M."/>
            <person name="Woodage T."/>
            <person name="Worley K.C."/>
            <person name="Wu D."/>
            <person name="Yang S."/>
            <person name="Yao Q.A."/>
            <person name="Ye J."/>
            <person name="Yeh R.-F."/>
            <person name="Zaveri J.S."/>
            <person name="Zhan M."/>
            <person name="Zhang G."/>
            <person name="Zhao Q."/>
            <person name="Zheng L."/>
            <person name="Zheng X.H."/>
            <person name="Zhong F.N."/>
            <person name="Zhong W."/>
            <person name="Zhou X."/>
            <person name="Zhu S.C."/>
            <person name="Zhu X."/>
            <person name="Smith H.O."/>
            <person name="Gibbs R.A."/>
            <person name="Myers E.W."/>
            <person name="Rubin G.M."/>
            <person name="Venter J.C."/>
        </authorList>
    </citation>
    <scope>NUCLEOTIDE SEQUENCE [LARGE SCALE GENOMIC DNA]</scope>
    <source>
        <strain>Berkeley</strain>
    </source>
</reference>
<reference key="4">
    <citation type="journal article" date="2002" name="Genome Biol.">
        <title>Annotation of the Drosophila melanogaster euchromatic genome: a systematic review.</title>
        <authorList>
            <person name="Misra S."/>
            <person name="Crosby M.A."/>
            <person name="Mungall C.J."/>
            <person name="Matthews B.B."/>
            <person name="Campbell K.S."/>
            <person name="Hradecky P."/>
            <person name="Huang Y."/>
            <person name="Kaminker J.S."/>
            <person name="Millburn G.H."/>
            <person name="Prochnik S.E."/>
            <person name="Smith C.D."/>
            <person name="Tupy J.L."/>
            <person name="Whitfield E.J."/>
            <person name="Bayraktaroglu L."/>
            <person name="Berman B.P."/>
            <person name="Bettencourt B.R."/>
            <person name="Celniker S.E."/>
            <person name="de Grey A.D.N.J."/>
            <person name="Drysdale R.A."/>
            <person name="Harris N.L."/>
            <person name="Richter J."/>
            <person name="Russo S."/>
            <person name="Schroeder A.J."/>
            <person name="Shu S.Q."/>
            <person name="Stapleton M."/>
            <person name="Yamada C."/>
            <person name="Ashburner M."/>
            <person name="Gelbart W.M."/>
            <person name="Rubin G.M."/>
            <person name="Lewis S.E."/>
        </authorList>
    </citation>
    <scope>GENOME REANNOTATION</scope>
    <scope>ALTERNATIVE SPLICING</scope>
    <source>
        <strain>Berkeley</strain>
    </source>
</reference>
<reference key="5">
    <citation type="journal article" date="2002" name="Genome Biol.">
        <title>A Drosophila full-length cDNA resource.</title>
        <authorList>
            <person name="Stapleton M."/>
            <person name="Carlson J.W."/>
            <person name="Brokstein P."/>
            <person name="Yu C."/>
            <person name="Champe M."/>
            <person name="George R.A."/>
            <person name="Guarin H."/>
            <person name="Kronmiller B."/>
            <person name="Pacleb J.M."/>
            <person name="Park S."/>
            <person name="Wan K.H."/>
            <person name="Rubin G.M."/>
            <person name="Celniker S.E."/>
        </authorList>
    </citation>
    <scope>NUCLEOTIDE SEQUENCE [LARGE SCALE MRNA] (ISOFORM A)</scope>
    <source>
        <strain>Berkeley</strain>
        <tissue>Embryo</tissue>
    </source>
</reference>
<reference key="6">
    <citation type="submission" date="2003-03" db="EMBL/GenBank/DDBJ databases">
        <authorList>
            <person name="Stapleton M."/>
            <person name="Brokstein P."/>
            <person name="Hong L."/>
            <person name="Agbayani A."/>
            <person name="Carlson J.W."/>
            <person name="Champe M."/>
            <person name="Chavez C."/>
            <person name="Dorsett V."/>
            <person name="Dresnek D."/>
            <person name="Farfan D."/>
            <person name="Frise E."/>
            <person name="George R.A."/>
            <person name="Gonzalez M."/>
            <person name="Guarin H."/>
            <person name="Kronmiller B."/>
            <person name="Li P.W."/>
            <person name="Liao G."/>
            <person name="Miranda A."/>
            <person name="Mungall C.J."/>
            <person name="Nunoo J."/>
            <person name="Pacleb J.M."/>
            <person name="Paragas V."/>
            <person name="Park S."/>
            <person name="Patel S."/>
            <person name="Phouanenavong S."/>
            <person name="Wan K.H."/>
            <person name="Yu C."/>
            <person name="Lewis S.E."/>
            <person name="Rubin G.M."/>
            <person name="Celniker S.E."/>
        </authorList>
    </citation>
    <scope>NUCLEOTIDE SEQUENCE (ISOFORM A)</scope>
    <source>
        <strain>Berkeley</strain>
        <tissue>Head</tissue>
    </source>
</reference>
<feature type="chain" id="PRO_0000075704" description="Protein apterous">
    <location>
        <begin position="1"/>
        <end position="469"/>
    </location>
</feature>
<feature type="domain" description="LIM zinc-binding 1" evidence="2">
    <location>
        <begin position="148"/>
        <end position="200"/>
    </location>
</feature>
<feature type="domain" description="LIM zinc-binding 2" evidence="2">
    <location>
        <begin position="210"/>
        <end position="263"/>
    </location>
</feature>
<feature type="DNA-binding region" description="Homeobox" evidence="1">
    <location>
        <begin position="367"/>
        <end position="426"/>
    </location>
</feature>
<feature type="region of interest" description="Disordered" evidence="3">
    <location>
        <begin position="21"/>
        <end position="44"/>
    </location>
</feature>
<feature type="region of interest" description="Disordered" evidence="3">
    <location>
        <begin position="111"/>
        <end position="141"/>
    </location>
</feature>
<feature type="splice variant" id="VSP_010293" description="In isoform B." evidence="4">
    <location>
        <begin position="1"/>
        <end position="223"/>
    </location>
</feature>
<feature type="sequence conflict" description="In Ref. 5; AAL39960." evidence="4" ref="5">
    <location>
        <position position="14"/>
    </location>
</feature>
<accession>P29673</accession>
<accession>Q8T9D4</accession>
<accession>Q9V9H5</accession>
<organism>
    <name type="scientific">Drosophila melanogaster</name>
    <name type="common">Fruit fly</name>
    <dbReference type="NCBI Taxonomy" id="7227"/>
    <lineage>
        <taxon>Eukaryota</taxon>
        <taxon>Metazoa</taxon>
        <taxon>Ecdysozoa</taxon>
        <taxon>Arthropoda</taxon>
        <taxon>Hexapoda</taxon>
        <taxon>Insecta</taxon>
        <taxon>Pterygota</taxon>
        <taxon>Neoptera</taxon>
        <taxon>Endopterygota</taxon>
        <taxon>Diptera</taxon>
        <taxon>Brachycera</taxon>
        <taxon>Muscomorpha</taxon>
        <taxon>Ephydroidea</taxon>
        <taxon>Drosophilidae</taxon>
        <taxon>Drosophila</taxon>
        <taxon>Sophophora</taxon>
    </lineage>
</organism>
<keyword id="KW-0025">Alternative splicing</keyword>
<keyword id="KW-0217">Developmental protein</keyword>
<keyword id="KW-0238">DNA-binding</keyword>
<keyword id="KW-0371">Homeobox</keyword>
<keyword id="KW-0440">LIM domain</keyword>
<keyword id="KW-0479">Metal-binding</keyword>
<keyword id="KW-0539">Nucleus</keyword>
<keyword id="KW-1185">Reference proteome</keyword>
<keyword id="KW-0677">Repeat</keyword>
<keyword id="KW-0862">Zinc</keyword>
<evidence type="ECO:0000255" key="1">
    <source>
        <dbReference type="PROSITE-ProRule" id="PRU00108"/>
    </source>
</evidence>
<evidence type="ECO:0000255" key="2">
    <source>
        <dbReference type="PROSITE-ProRule" id="PRU00125"/>
    </source>
</evidence>
<evidence type="ECO:0000256" key="3">
    <source>
        <dbReference type="SAM" id="MobiDB-lite"/>
    </source>
</evidence>
<evidence type="ECO:0000305" key="4"/>
<protein>
    <recommendedName>
        <fullName>Protein apterous</fullName>
    </recommendedName>
</protein>
<sequence>MGVCTEERPVMHWQQSARFLGPGAREKSPTPPVAHQGSNQCGSAAGANNNHPLFRACSSSSCPDICDHSTKPFGNAYGTESFRSYETADRATFEDSAAKFSISRSRTDCTEVSDETTSGISFKTEPFGPPSSPESTSDSKITRNLDDCSGCGRQIQDRFYLSAVEKRWHASCLQCYACRQPLERESSCYSRDGNIYCKNDYYSFFGTRRCSRCLASISSNELVMRARNLVFHVNCFCCTVCHTPLTKGDQYGIIDALIYCRTHYSIAREGDTASSSMSATYPYSAQFGSPHNDSSSPHSDPSRSIVPTGIFVPASHVINGLPQPARQKGRPRKRKPKDIEAFTANIDLNTEYVDFGRGSHLSSSSRTKRMRTSFKHHQLRTMKSYFAINHNPDAKDLKQLSQKTGLPKRVLQVWFQNARAKWRRMMMKQDGSGLLEKGEGALDLDSISVHSPTSFILGGPNSTPPLNLD</sequence>
<proteinExistence type="evidence at transcript level"/>
<comment type="function">
    <text>Required for the normal development of the wing and halter imaginal disks.</text>
</comment>
<comment type="subcellular location">
    <subcellularLocation>
        <location>Nucleus</location>
    </subcellularLocation>
</comment>
<comment type="alternative products">
    <event type="alternative splicing"/>
    <isoform>
        <id>P29673-1</id>
        <name>A</name>
        <sequence type="displayed"/>
    </isoform>
    <isoform>
        <id>P29673-2</id>
        <name>B</name>
        <sequence type="described" ref="VSP_010293"/>
    </isoform>
</comment>
<comment type="tissue specificity">
    <text>Expressed in PNS and CNS.</text>
</comment>
<dbReference type="EMBL" id="X65158">
    <property type="protein sequence ID" value="CAA46276.1"/>
    <property type="molecule type" value="Genomic_DNA"/>
</dbReference>
<dbReference type="EMBL" id="M92841">
    <property type="protein sequence ID" value="AAA28673.1"/>
    <property type="molecule type" value="mRNA"/>
</dbReference>
<dbReference type="EMBL" id="AE013599">
    <property type="protein sequence ID" value="AAF57314.1"/>
    <property type="molecule type" value="Genomic_DNA"/>
</dbReference>
<dbReference type="EMBL" id="AE013599">
    <property type="protein sequence ID" value="AAM68357.2"/>
    <property type="molecule type" value="Genomic_DNA"/>
</dbReference>
<dbReference type="EMBL" id="AY069815">
    <property type="protein sequence ID" value="AAL39960.1"/>
    <property type="molecule type" value="mRNA"/>
</dbReference>
<dbReference type="EMBL" id="BT005201">
    <property type="protein sequence ID" value="AAO61758.1"/>
    <property type="molecule type" value="mRNA"/>
</dbReference>
<dbReference type="PIR" id="JH0718">
    <property type="entry name" value="JH0718"/>
</dbReference>
<dbReference type="RefSeq" id="NP_001163058.1">
    <property type="nucleotide sequence ID" value="NM_001169587.2"/>
</dbReference>
<dbReference type="RefSeq" id="NP_001163059.1">
    <molecule id="P29673-2"/>
    <property type="nucleotide sequence ID" value="NM_001169588.2"/>
</dbReference>
<dbReference type="RefSeq" id="NP_523621.2">
    <molecule id="P29673-2"/>
    <property type="nucleotide sequence ID" value="NM_078897.4"/>
</dbReference>
<dbReference type="RefSeq" id="NP_724428.1">
    <molecule id="P29673-1"/>
    <property type="nucleotide sequence ID" value="NM_165445.4"/>
</dbReference>
<dbReference type="SMR" id="P29673"/>
<dbReference type="BioGRID" id="61416">
    <property type="interactions" value="36"/>
</dbReference>
<dbReference type="DIP" id="DIP-23617N"/>
<dbReference type="FunCoup" id="P29673">
    <property type="interactions" value="594"/>
</dbReference>
<dbReference type="IntAct" id="P29673">
    <property type="interactions" value="1"/>
</dbReference>
<dbReference type="STRING" id="7227.FBpp0085394"/>
<dbReference type="GlyGen" id="P29673">
    <property type="glycosylation" value="1 site"/>
</dbReference>
<dbReference type="PaxDb" id="7227-FBpp0085394"/>
<dbReference type="DNASU" id="35509"/>
<dbReference type="EnsemblMetazoa" id="FBtr0086058">
    <molecule id="P29673-1"/>
    <property type="protein sequence ID" value="FBpp0085394"/>
    <property type="gene ID" value="FBgn0267978"/>
</dbReference>
<dbReference type="EnsemblMetazoa" id="FBtr0086059">
    <molecule id="P29673-2"/>
    <property type="protein sequence ID" value="FBpp0085395"/>
    <property type="gene ID" value="FBgn0267978"/>
</dbReference>
<dbReference type="EnsemblMetazoa" id="FBtr0335274">
    <molecule id="P29673-2"/>
    <property type="protein sequence ID" value="FBpp0307253"/>
    <property type="gene ID" value="FBgn0267978"/>
</dbReference>
<dbReference type="GeneID" id="35509"/>
<dbReference type="KEGG" id="dme:Dmel_CG8376"/>
<dbReference type="UCSC" id="CG8376-RA">
    <molecule id="P29673-1"/>
    <property type="organism name" value="d. melanogaster"/>
</dbReference>
<dbReference type="AGR" id="FB:FBgn0267978"/>
<dbReference type="CTD" id="11763"/>
<dbReference type="FlyBase" id="FBgn0267978">
    <property type="gene designation" value="ap"/>
</dbReference>
<dbReference type="VEuPathDB" id="VectorBase:FBgn0267978"/>
<dbReference type="eggNOG" id="KOG0490">
    <property type="taxonomic scope" value="Eukaryota"/>
</dbReference>
<dbReference type="GeneTree" id="ENSGT00940000165771"/>
<dbReference type="HOGENOM" id="CLU_027802_2_2_1"/>
<dbReference type="InParanoid" id="P29673"/>
<dbReference type="OMA" id="IHYELAV"/>
<dbReference type="OrthoDB" id="9990008at2759"/>
<dbReference type="PhylomeDB" id="P29673"/>
<dbReference type="SignaLink" id="P29673"/>
<dbReference type="BioGRID-ORCS" id="35509">
    <property type="hits" value="1 hit in 3 CRISPR screens"/>
</dbReference>
<dbReference type="GenomeRNAi" id="35509"/>
<dbReference type="PRO" id="PR:P29673"/>
<dbReference type="Proteomes" id="UP000000803">
    <property type="component" value="Chromosome 2R"/>
</dbReference>
<dbReference type="Bgee" id="FBgn0267978">
    <property type="expression patterns" value="Expressed in wing disc and 126 other cell types or tissues"/>
</dbReference>
<dbReference type="ExpressionAtlas" id="P29673">
    <property type="expression patterns" value="baseline and differential"/>
</dbReference>
<dbReference type="GO" id="GO:0005634">
    <property type="term" value="C:nucleus"/>
    <property type="evidence" value="ECO:0000314"/>
    <property type="project" value="FlyBase"/>
</dbReference>
<dbReference type="GO" id="GO:0000981">
    <property type="term" value="F:DNA-binding transcription factor activity, RNA polymerase II-specific"/>
    <property type="evidence" value="ECO:0000318"/>
    <property type="project" value="GO_Central"/>
</dbReference>
<dbReference type="GO" id="GO:0046872">
    <property type="term" value="F:metal ion binding"/>
    <property type="evidence" value="ECO:0007669"/>
    <property type="project" value="UniProtKB-KW"/>
</dbReference>
<dbReference type="GO" id="GO:0000977">
    <property type="term" value="F:RNA polymerase II transcription regulatory region sequence-specific DNA binding"/>
    <property type="evidence" value="ECO:0000314"/>
    <property type="project" value="FlyBase"/>
</dbReference>
<dbReference type="GO" id="GO:0060033">
    <property type="term" value="P:anatomical structure regression"/>
    <property type="evidence" value="ECO:0000315"/>
    <property type="project" value="FlyBase"/>
</dbReference>
<dbReference type="GO" id="GO:0007411">
    <property type="term" value="P:axon guidance"/>
    <property type="evidence" value="ECO:0000315"/>
    <property type="project" value="FlyBase"/>
</dbReference>
<dbReference type="GO" id="GO:0045165">
    <property type="term" value="P:cell fate commitment"/>
    <property type="evidence" value="ECO:0000303"/>
    <property type="project" value="FlyBase"/>
</dbReference>
<dbReference type="GO" id="GO:0007451">
    <property type="term" value="P:dorsal/ventral lineage restriction, imaginal disc"/>
    <property type="evidence" value="ECO:0000304"/>
    <property type="project" value="FlyBase"/>
</dbReference>
<dbReference type="GO" id="GO:0007450">
    <property type="term" value="P:dorsal/ventral pattern formation, imaginal disc"/>
    <property type="evidence" value="ECO:0000304"/>
    <property type="project" value="FlyBase"/>
</dbReference>
<dbReference type="GO" id="GO:0048735">
    <property type="term" value="P:haltere morphogenesis"/>
    <property type="evidence" value="ECO:0000315"/>
    <property type="project" value="FlyBase"/>
</dbReference>
<dbReference type="GO" id="GO:0036011">
    <property type="term" value="P:imaginal disc-derived leg segmentation"/>
    <property type="evidence" value="ECO:0000315"/>
    <property type="project" value="FlyBase"/>
</dbReference>
<dbReference type="GO" id="GO:0007476">
    <property type="term" value="P:imaginal disc-derived wing morphogenesis"/>
    <property type="evidence" value="ECO:0000315"/>
    <property type="project" value="FlyBase"/>
</dbReference>
<dbReference type="GO" id="GO:0007526">
    <property type="term" value="P:larval somatic muscle development"/>
    <property type="evidence" value="ECO:0000315"/>
    <property type="project" value="FlyBase"/>
</dbReference>
<dbReference type="GO" id="GO:0035218">
    <property type="term" value="P:leg disc development"/>
    <property type="evidence" value="ECO:0000315"/>
    <property type="project" value="FlyBase"/>
</dbReference>
<dbReference type="GO" id="GO:0007479">
    <property type="term" value="P:leg disc proximal/distal pattern formation"/>
    <property type="evidence" value="ECO:0000315"/>
    <property type="project" value="FlyBase"/>
</dbReference>
<dbReference type="GO" id="GO:0007517">
    <property type="term" value="P:muscle organ development"/>
    <property type="evidence" value="ECO:0000315"/>
    <property type="project" value="FlyBase"/>
</dbReference>
<dbReference type="GO" id="GO:0007399">
    <property type="term" value="P:nervous system development"/>
    <property type="evidence" value="ECO:0000315"/>
    <property type="project" value="FlyBase"/>
</dbReference>
<dbReference type="GO" id="GO:0030182">
    <property type="term" value="P:neuron differentiation"/>
    <property type="evidence" value="ECO:0000318"/>
    <property type="project" value="GO_Central"/>
</dbReference>
<dbReference type="GO" id="GO:0010628">
    <property type="term" value="P:positive regulation of gene expression"/>
    <property type="evidence" value="ECO:0000315"/>
    <property type="project" value="FlyBase"/>
</dbReference>
<dbReference type="GO" id="GO:0045944">
    <property type="term" value="P:positive regulation of transcription by RNA polymerase II"/>
    <property type="evidence" value="ECO:0000314"/>
    <property type="project" value="FlyBase"/>
</dbReference>
<dbReference type="GO" id="GO:0006357">
    <property type="term" value="P:regulation of transcription by RNA polymerase II"/>
    <property type="evidence" value="ECO:0000318"/>
    <property type="project" value="GO_Central"/>
</dbReference>
<dbReference type="GO" id="GO:0007419">
    <property type="term" value="P:ventral cord development"/>
    <property type="evidence" value="ECO:0007001"/>
    <property type="project" value="FlyBase"/>
</dbReference>
<dbReference type="GO" id="GO:0048190">
    <property type="term" value="P:wing disc dorsal/ventral pattern formation"/>
    <property type="evidence" value="ECO:0000315"/>
    <property type="project" value="FlyBase"/>
</dbReference>
<dbReference type="CDD" id="cd00086">
    <property type="entry name" value="homeodomain"/>
    <property type="match status" value="1"/>
</dbReference>
<dbReference type="CDD" id="cd09369">
    <property type="entry name" value="LIM1_Lhx2_Lhx9"/>
    <property type="match status" value="1"/>
</dbReference>
<dbReference type="CDD" id="cd09377">
    <property type="entry name" value="LIM2_Lhx2_Lhx9"/>
    <property type="match status" value="1"/>
</dbReference>
<dbReference type="FunFam" id="2.10.110.10:FF:000116">
    <property type="entry name" value="Ap, isoform A"/>
    <property type="match status" value="1"/>
</dbReference>
<dbReference type="FunFam" id="2.10.110.10:FF:000114">
    <property type="entry name" value="Apterous, isoform B"/>
    <property type="match status" value="1"/>
</dbReference>
<dbReference type="FunFam" id="1.10.10.60:FF:000027">
    <property type="entry name" value="LIM/homeobox protein Lhx9"/>
    <property type="match status" value="1"/>
</dbReference>
<dbReference type="Gene3D" id="2.10.110.10">
    <property type="entry name" value="Cysteine Rich Protein"/>
    <property type="match status" value="2"/>
</dbReference>
<dbReference type="Gene3D" id="1.10.10.60">
    <property type="entry name" value="Homeodomain-like"/>
    <property type="match status" value="1"/>
</dbReference>
<dbReference type="InterPro" id="IPR001356">
    <property type="entry name" value="HD"/>
</dbReference>
<dbReference type="InterPro" id="IPR017970">
    <property type="entry name" value="Homeobox_CS"/>
</dbReference>
<dbReference type="InterPro" id="IPR009057">
    <property type="entry name" value="Homeodomain-like_sf"/>
</dbReference>
<dbReference type="InterPro" id="IPR050453">
    <property type="entry name" value="LIM_Homeobox_TF"/>
</dbReference>
<dbReference type="InterPro" id="IPR001781">
    <property type="entry name" value="Znf_LIM"/>
</dbReference>
<dbReference type="PANTHER" id="PTHR24208">
    <property type="entry name" value="LIM/HOMEOBOX PROTEIN LHX"/>
    <property type="match status" value="1"/>
</dbReference>
<dbReference type="PANTHER" id="PTHR24208:SF168">
    <property type="entry name" value="PROTEIN APTEROUS"/>
    <property type="match status" value="1"/>
</dbReference>
<dbReference type="Pfam" id="PF00046">
    <property type="entry name" value="Homeodomain"/>
    <property type="match status" value="1"/>
</dbReference>
<dbReference type="Pfam" id="PF00412">
    <property type="entry name" value="LIM"/>
    <property type="match status" value="2"/>
</dbReference>
<dbReference type="SMART" id="SM00389">
    <property type="entry name" value="HOX"/>
    <property type="match status" value="1"/>
</dbReference>
<dbReference type="SMART" id="SM00132">
    <property type="entry name" value="LIM"/>
    <property type="match status" value="2"/>
</dbReference>
<dbReference type="SUPFAM" id="SSF57716">
    <property type="entry name" value="Glucocorticoid receptor-like (DNA-binding domain)"/>
    <property type="match status" value="2"/>
</dbReference>
<dbReference type="SUPFAM" id="SSF46689">
    <property type="entry name" value="Homeodomain-like"/>
    <property type="match status" value="1"/>
</dbReference>
<dbReference type="PROSITE" id="PS00027">
    <property type="entry name" value="HOMEOBOX_1"/>
    <property type="match status" value="1"/>
</dbReference>
<dbReference type="PROSITE" id="PS50071">
    <property type="entry name" value="HOMEOBOX_2"/>
    <property type="match status" value="1"/>
</dbReference>
<dbReference type="PROSITE" id="PS00478">
    <property type="entry name" value="LIM_DOMAIN_1"/>
    <property type="match status" value="2"/>
</dbReference>
<dbReference type="PROSITE" id="PS50023">
    <property type="entry name" value="LIM_DOMAIN_2"/>
    <property type="match status" value="2"/>
</dbReference>
<gene>
    <name type="primary">ap</name>
    <name type="ORF">CG8376</name>
</gene>
<name>APTE_DROME</name>